<dbReference type="EC" id="3.1.-.-" evidence="1"/>
<dbReference type="EMBL" id="AE009441">
    <property type="protein sequence ID" value="AAL62596.1"/>
    <property type="molecule type" value="Genomic_DNA"/>
</dbReference>
<dbReference type="RefSeq" id="WP_011007068.1">
    <property type="nucleotide sequence ID" value="NC_003364.1"/>
</dbReference>
<dbReference type="PDB" id="2FE1">
    <property type="method" value="X-ray"/>
    <property type="resolution" value="2.20 A"/>
    <property type="chains" value="A=1-131"/>
</dbReference>
<dbReference type="PDBsum" id="2FE1"/>
<dbReference type="SMR" id="Q8ZZP3"/>
<dbReference type="STRING" id="178306.PAE0151"/>
<dbReference type="EnsemblBacteria" id="AAL62596">
    <property type="protein sequence ID" value="AAL62596"/>
    <property type="gene ID" value="PAE0151"/>
</dbReference>
<dbReference type="GeneID" id="1464812"/>
<dbReference type="KEGG" id="pai:PAE0151"/>
<dbReference type="PATRIC" id="fig|178306.9.peg.108"/>
<dbReference type="eggNOG" id="arCOG00726">
    <property type="taxonomic scope" value="Archaea"/>
</dbReference>
<dbReference type="HOGENOM" id="CLU_121774_1_4_2"/>
<dbReference type="InParanoid" id="Q8ZZP3"/>
<dbReference type="EvolutionaryTrace" id="Q8ZZP3"/>
<dbReference type="Proteomes" id="UP000002439">
    <property type="component" value="Chromosome"/>
</dbReference>
<dbReference type="GO" id="GO:0000287">
    <property type="term" value="F:magnesium ion binding"/>
    <property type="evidence" value="ECO:0007669"/>
    <property type="project" value="UniProtKB-UniRule"/>
</dbReference>
<dbReference type="GO" id="GO:0004540">
    <property type="term" value="F:RNA nuclease activity"/>
    <property type="evidence" value="ECO:0007669"/>
    <property type="project" value="InterPro"/>
</dbReference>
<dbReference type="CDD" id="cd09873">
    <property type="entry name" value="PIN_Pae0151-like"/>
    <property type="match status" value="1"/>
</dbReference>
<dbReference type="Gene3D" id="3.40.50.1010">
    <property type="entry name" value="5'-nuclease"/>
    <property type="match status" value="1"/>
</dbReference>
<dbReference type="HAMAP" id="MF_00265">
    <property type="entry name" value="VapC_Nob1"/>
    <property type="match status" value="1"/>
</dbReference>
<dbReference type="InterPro" id="IPR029060">
    <property type="entry name" value="PIN-like_dom_sf"/>
</dbReference>
<dbReference type="InterPro" id="IPR002716">
    <property type="entry name" value="PIN_dom"/>
</dbReference>
<dbReference type="InterPro" id="IPR044153">
    <property type="entry name" value="PIN_Pae0151-like"/>
</dbReference>
<dbReference type="InterPro" id="IPR051619">
    <property type="entry name" value="TypeII_TA_RNase_PINc/VapC"/>
</dbReference>
<dbReference type="InterPro" id="IPR022907">
    <property type="entry name" value="VapC_family"/>
</dbReference>
<dbReference type="PANTHER" id="PTHR35901:SF1">
    <property type="entry name" value="EXONUCLEASE VAPC9"/>
    <property type="match status" value="1"/>
</dbReference>
<dbReference type="PANTHER" id="PTHR35901">
    <property type="entry name" value="RIBONUCLEASE VAPC3"/>
    <property type="match status" value="1"/>
</dbReference>
<dbReference type="Pfam" id="PF01850">
    <property type="entry name" value="PIN"/>
    <property type="match status" value="1"/>
</dbReference>
<dbReference type="SUPFAM" id="SSF88723">
    <property type="entry name" value="PIN domain-like"/>
    <property type="match status" value="1"/>
</dbReference>
<accession>Q8ZZP3</accession>
<name>VAPC3_PYRAE</name>
<reference key="1">
    <citation type="journal article" date="2002" name="Proc. Natl. Acad. Sci. U.S.A.">
        <title>Genome sequence of the hyperthermophilic crenarchaeon Pyrobaculum aerophilum.</title>
        <authorList>
            <person name="Fitz-Gibbon S.T."/>
            <person name="Ladner H."/>
            <person name="Kim U.-J."/>
            <person name="Stetter K.O."/>
            <person name="Simon M.I."/>
            <person name="Miller J.H."/>
        </authorList>
    </citation>
    <scope>NUCLEOTIDE SEQUENCE [LARGE SCALE GENOMIC DNA]</scope>
    <source>
        <strain>ATCC 51768 / DSM 7523 / JCM 9630 / CIP 104966 / NBRC 100827 / IM2</strain>
    </source>
</reference>
<reference key="2">
    <citation type="journal article" date="2005" name="Nucleic Acids Res.">
        <title>Toxin-antitoxin loci are highly abundant in free-living but lost from host-associated prokaryotes.</title>
        <authorList>
            <person name="Pandey D.P."/>
            <person name="Gerdes K."/>
        </authorList>
    </citation>
    <scope>POSSIBLE FUNCTION</scope>
    <source>
        <strain>ATCC 51768 / DSM 7523 / JCM 9630 / CIP 104966 / NBRC 100827 / IM2</strain>
    </source>
</reference>
<reference key="3">
    <citation type="journal article" date="2012" name="RNA">
        <title>Determination of ribonuclease sequence-specificity using Pentaprobes and mass spectrometry.</title>
        <authorList>
            <person name="McKenzie J.L."/>
            <person name="Duyvestyn J.M."/>
            <person name="Smith T."/>
            <person name="Bendak K."/>
            <person name="Mackay J."/>
            <person name="Cursons R."/>
            <person name="Cook G.M."/>
            <person name="Arcus V.L."/>
        </authorList>
    </citation>
    <scope>FUNCTION</scope>
    <scope>ACTIVITY REGULATION</scope>
    <scope>COFACTOR</scope>
</reference>
<reference key="4">
    <citation type="journal article" date="2008" name="Proteins">
        <title>Crystal structure of PAE0151 from Pyrobaculum aerophilum, a PIN-domain (VapC) protein from a toxin-antitoxin operon.</title>
        <authorList>
            <person name="Bunker R.D."/>
            <person name="McKenzie J.L."/>
            <person name="Baker E.N."/>
            <person name="Arcus V.L."/>
        </authorList>
    </citation>
    <scope>X-RAY CRYSTALLOGRAPHY (2.20 ANGSTROMS) OF 3-131 IN COMPLEX WITH MANGANESE</scope>
    <scope>COFACTOR</scope>
    <scope>SUBUNIT</scope>
    <source>
        <strain>ATCC 51768 / DSM 7523 / JCM 9630 / CIP 104966 / NBRC 100827 / IM2</strain>
    </source>
</reference>
<protein>
    <recommendedName>
        <fullName evidence="1">Ribonuclease VapC3</fullName>
        <shortName evidence="1">RNase VapC3</shortName>
        <ecNumber evidence="1">3.1.-.-</ecNumber>
    </recommendedName>
    <alternativeName>
        <fullName evidence="1">Putative toxin VapC3</fullName>
    </alternativeName>
</protein>
<comment type="function">
    <text evidence="3">Toxic component of a type II toxin-antitoxin (TA) system. Has ribonuclease activity.</text>
</comment>
<comment type="cofactor">
    <cofactor evidence="1 2 3">
        <name>Mg(2+)</name>
        <dbReference type="ChEBI" id="CHEBI:18420"/>
    </cofactor>
</comment>
<comment type="activity regulation">
    <text evidence="3">Inhibited by EDTA.</text>
</comment>
<comment type="subunit">
    <text evidence="2">Homodimer. Forms a complex with putative antitoxin VapB3, possibly VapB(2)-VapC(2).</text>
</comment>
<comment type="similarity">
    <text evidence="1">Belongs to the PINc/VapC protein family.</text>
</comment>
<evidence type="ECO:0000255" key="1">
    <source>
        <dbReference type="HAMAP-Rule" id="MF_00265"/>
    </source>
</evidence>
<evidence type="ECO:0000269" key="2">
    <source>
    </source>
</evidence>
<evidence type="ECO:0000269" key="3">
    <source>
    </source>
</evidence>
<evidence type="ECO:0007829" key="4">
    <source>
        <dbReference type="PDB" id="2FE1"/>
    </source>
</evidence>
<sequence length="131" mass="14625">MKLVVDASAIAALYVPEERSEQAERAVSQAQELHTLDLAAYEVANDLWKHARRGLLREDEASNMLEELWEFFKALKVHSYAEVLKDAFALALKHGVTVYDAAYVALAEKIGGKLLTLDRQLAEKFPALVTP</sequence>
<keyword id="KW-0002">3D-structure</keyword>
<keyword id="KW-0378">Hydrolase</keyword>
<keyword id="KW-0460">Magnesium</keyword>
<keyword id="KW-0479">Metal-binding</keyword>
<keyword id="KW-0540">Nuclease</keyword>
<keyword id="KW-1185">Reference proteome</keyword>
<keyword id="KW-1277">Toxin-antitoxin system</keyword>
<organism>
    <name type="scientific">Pyrobaculum aerophilum (strain ATCC 51768 / DSM 7523 / JCM 9630 / CIP 104966 / NBRC 100827 / IM2)</name>
    <dbReference type="NCBI Taxonomy" id="178306"/>
    <lineage>
        <taxon>Archaea</taxon>
        <taxon>Thermoproteota</taxon>
        <taxon>Thermoprotei</taxon>
        <taxon>Thermoproteales</taxon>
        <taxon>Thermoproteaceae</taxon>
        <taxon>Pyrobaculum</taxon>
    </lineage>
</organism>
<proteinExistence type="evidence at protein level"/>
<feature type="chain" id="PRO_0000407903" description="Ribonuclease VapC3">
    <location>
        <begin position="1"/>
        <end position="131"/>
    </location>
</feature>
<feature type="domain" description="PINc" evidence="1">
    <location>
        <begin position="4"/>
        <end position="121"/>
    </location>
</feature>
<feature type="binding site" evidence="1">
    <location>
        <position position="6"/>
    </location>
    <ligand>
        <name>Mg(2+)</name>
        <dbReference type="ChEBI" id="CHEBI:18420"/>
    </ligand>
</feature>
<feature type="binding site" evidence="1">
    <location>
        <position position="100"/>
    </location>
    <ligand>
        <name>Mg(2+)</name>
        <dbReference type="ChEBI" id="CHEBI:18420"/>
    </ligand>
</feature>
<feature type="binding site">
    <location>
        <position position="118"/>
    </location>
    <ligand>
        <name>Mg(2+)</name>
        <dbReference type="ChEBI" id="CHEBI:18420"/>
    </ligand>
</feature>
<feature type="strand" evidence="4">
    <location>
        <begin position="2"/>
        <end position="5"/>
    </location>
</feature>
<feature type="helix" evidence="4">
    <location>
        <begin position="7"/>
        <end position="11"/>
    </location>
</feature>
<feature type="strand" evidence="4">
    <location>
        <begin position="14"/>
        <end position="16"/>
    </location>
</feature>
<feature type="helix" evidence="4">
    <location>
        <begin position="21"/>
        <end position="29"/>
    </location>
</feature>
<feature type="strand" evidence="4">
    <location>
        <begin position="31"/>
        <end position="36"/>
    </location>
</feature>
<feature type="helix" evidence="4">
    <location>
        <begin position="37"/>
        <end position="52"/>
    </location>
</feature>
<feature type="helix" evidence="4">
    <location>
        <begin position="58"/>
        <end position="72"/>
    </location>
</feature>
<feature type="strand" evidence="4">
    <location>
        <begin position="75"/>
        <end position="78"/>
    </location>
</feature>
<feature type="helix" evidence="4">
    <location>
        <begin position="80"/>
        <end position="82"/>
    </location>
</feature>
<feature type="helix" evidence="4">
    <location>
        <begin position="84"/>
        <end position="94"/>
    </location>
</feature>
<feature type="helix" evidence="4">
    <location>
        <begin position="98"/>
        <end position="110"/>
    </location>
</feature>
<feature type="strand" evidence="4">
    <location>
        <begin position="113"/>
        <end position="115"/>
    </location>
</feature>
<feature type="helix" evidence="4">
    <location>
        <begin position="119"/>
        <end position="124"/>
    </location>
</feature>
<feature type="turn" evidence="4">
    <location>
        <begin position="126"/>
        <end position="128"/>
    </location>
</feature>
<gene>
    <name evidence="1" type="primary">vapC3</name>
    <name type="ordered locus">PAE0151</name>
</gene>